<gene>
    <name evidence="1" type="primary">atpB</name>
    <name type="ordered locus">MGAS10270_Spy0134</name>
</gene>
<feature type="chain" id="PRO_1000059392" description="V-type ATP synthase beta chain">
    <location>
        <begin position="1"/>
        <end position="471"/>
    </location>
</feature>
<keyword id="KW-0066">ATP synthesis</keyword>
<keyword id="KW-0375">Hydrogen ion transport</keyword>
<keyword id="KW-0406">Ion transport</keyword>
<keyword id="KW-0813">Transport</keyword>
<comment type="function">
    <text evidence="1">Produces ATP from ADP in the presence of a proton gradient across the membrane. The V-type beta chain is a regulatory subunit.</text>
</comment>
<comment type="similarity">
    <text evidence="1">Belongs to the ATPase alpha/beta chains family.</text>
</comment>
<dbReference type="EMBL" id="CP000260">
    <property type="protein sequence ID" value="ABF33199.1"/>
    <property type="molecule type" value="Genomic_DNA"/>
</dbReference>
<dbReference type="SMR" id="Q1JIX4"/>
<dbReference type="KEGG" id="sph:MGAS10270_Spy0134"/>
<dbReference type="HOGENOM" id="CLU_022916_0_0_9"/>
<dbReference type="Proteomes" id="UP000002436">
    <property type="component" value="Chromosome"/>
</dbReference>
<dbReference type="GO" id="GO:0005524">
    <property type="term" value="F:ATP binding"/>
    <property type="evidence" value="ECO:0007669"/>
    <property type="project" value="UniProtKB-UniRule"/>
</dbReference>
<dbReference type="GO" id="GO:0046933">
    <property type="term" value="F:proton-transporting ATP synthase activity, rotational mechanism"/>
    <property type="evidence" value="ECO:0007669"/>
    <property type="project" value="UniProtKB-UniRule"/>
</dbReference>
<dbReference type="GO" id="GO:0042777">
    <property type="term" value="P:proton motive force-driven plasma membrane ATP synthesis"/>
    <property type="evidence" value="ECO:0007669"/>
    <property type="project" value="UniProtKB-UniRule"/>
</dbReference>
<dbReference type="CDD" id="cd18112">
    <property type="entry name" value="ATP-synt_V_A-type_beta_C"/>
    <property type="match status" value="1"/>
</dbReference>
<dbReference type="CDD" id="cd18118">
    <property type="entry name" value="ATP-synt_V_A-type_beta_N"/>
    <property type="match status" value="1"/>
</dbReference>
<dbReference type="CDD" id="cd01135">
    <property type="entry name" value="V_A-ATPase_B"/>
    <property type="match status" value="1"/>
</dbReference>
<dbReference type="Gene3D" id="3.40.50.12240">
    <property type="match status" value="1"/>
</dbReference>
<dbReference type="HAMAP" id="MF_00310">
    <property type="entry name" value="ATP_synth_B_arch"/>
    <property type="match status" value="1"/>
</dbReference>
<dbReference type="InterPro" id="IPR055190">
    <property type="entry name" value="ATP-synt_VA_C"/>
</dbReference>
<dbReference type="InterPro" id="IPR020003">
    <property type="entry name" value="ATPase_a/bsu_AS"/>
</dbReference>
<dbReference type="InterPro" id="IPR004100">
    <property type="entry name" value="ATPase_F1/V1/A1_a/bsu_N"/>
</dbReference>
<dbReference type="InterPro" id="IPR000194">
    <property type="entry name" value="ATPase_F1/V1/A1_a/bsu_nucl-bd"/>
</dbReference>
<dbReference type="InterPro" id="IPR027417">
    <property type="entry name" value="P-loop_NTPase"/>
</dbReference>
<dbReference type="InterPro" id="IPR022879">
    <property type="entry name" value="V-ATPase_su_B/beta"/>
</dbReference>
<dbReference type="NCBIfam" id="NF003235">
    <property type="entry name" value="PRK04196.1"/>
    <property type="match status" value="1"/>
</dbReference>
<dbReference type="PANTHER" id="PTHR43389">
    <property type="entry name" value="V-TYPE PROTON ATPASE SUBUNIT B"/>
    <property type="match status" value="1"/>
</dbReference>
<dbReference type="PANTHER" id="PTHR43389:SF4">
    <property type="entry name" value="V-TYPE PROTON ATPASE SUBUNIT B"/>
    <property type="match status" value="1"/>
</dbReference>
<dbReference type="Pfam" id="PF00006">
    <property type="entry name" value="ATP-synt_ab"/>
    <property type="match status" value="1"/>
</dbReference>
<dbReference type="Pfam" id="PF02874">
    <property type="entry name" value="ATP-synt_ab_N"/>
    <property type="match status" value="1"/>
</dbReference>
<dbReference type="Pfam" id="PF22919">
    <property type="entry name" value="ATP-synt_VA_C"/>
    <property type="match status" value="1"/>
</dbReference>
<dbReference type="PIRSF" id="PIRSF039114">
    <property type="entry name" value="V-ATPsynth_beta/V-ATPase_B"/>
    <property type="match status" value="1"/>
</dbReference>
<dbReference type="SUPFAM" id="SSF47917">
    <property type="entry name" value="C-terminal domain of alpha and beta subunits of F1 ATP synthase"/>
    <property type="match status" value="1"/>
</dbReference>
<dbReference type="SUPFAM" id="SSF52540">
    <property type="entry name" value="P-loop containing nucleoside triphosphate hydrolases"/>
    <property type="match status" value="1"/>
</dbReference>
<dbReference type="PROSITE" id="PS00152">
    <property type="entry name" value="ATPASE_ALPHA_BETA"/>
    <property type="match status" value="1"/>
</dbReference>
<sequence length="471" mass="52358">MSVLKEYRTVSEVVGPLMIVDQVAGVHYNELVDITLHNGERRKGQVLEVQGDKAMVQLFEGSTGINLAKTKVRFTGHPLELAVSEDMVGRIFDGMGQPIDGGPELIPEKYLDIDGQAINPVARDYPDEFIQTGISAIDHLNTLVRGQKLPVFSGSGLPHNELAAQIARQATVLNSDDNFAVVFAAMGITFEEAEFFMNDLRETGAIDRSVLFINLANDPAIERIATPRIALTTAEYLAYEKGMHVLVIMTDMTNYCEALREVSAARREVPGRRGYPGYLYTNLSTLYERAGRLIGKKGSVTQIPILTMPEDDITHPIPDLTGYITEGQIILSQELYKNGFRPPINVLPSLSRLKDKGSGEGKTRQDHAATMNQLFAAYAQGKQAKELAVVLGESALSETDKLYVAFTNRFEEEYINQGFYTNRSIEESLDLGWELLSILPRTELKRIKDDMLDRYLPKADTTMTKVFVAND</sequence>
<evidence type="ECO:0000255" key="1">
    <source>
        <dbReference type="HAMAP-Rule" id="MF_00310"/>
    </source>
</evidence>
<name>VATB_STRPD</name>
<protein>
    <recommendedName>
        <fullName evidence="1">V-type ATP synthase beta chain</fullName>
    </recommendedName>
    <alternativeName>
        <fullName evidence="1">V-ATPase subunit B</fullName>
    </alternativeName>
</protein>
<organism>
    <name type="scientific">Streptococcus pyogenes serotype M2 (strain MGAS10270)</name>
    <dbReference type="NCBI Taxonomy" id="370552"/>
    <lineage>
        <taxon>Bacteria</taxon>
        <taxon>Bacillati</taxon>
        <taxon>Bacillota</taxon>
        <taxon>Bacilli</taxon>
        <taxon>Lactobacillales</taxon>
        <taxon>Streptococcaceae</taxon>
        <taxon>Streptococcus</taxon>
    </lineage>
</organism>
<reference key="1">
    <citation type="journal article" date="2006" name="Proc. Natl. Acad. Sci. U.S.A.">
        <title>Molecular genetic anatomy of inter- and intraserotype variation in the human bacterial pathogen group A Streptococcus.</title>
        <authorList>
            <person name="Beres S.B."/>
            <person name="Richter E.W."/>
            <person name="Nagiec M.J."/>
            <person name="Sumby P."/>
            <person name="Porcella S.F."/>
            <person name="DeLeo F.R."/>
            <person name="Musser J.M."/>
        </authorList>
    </citation>
    <scope>NUCLEOTIDE SEQUENCE [LARGE SCALE GENOMIC DNA]</scope>
    <source>
        <strain>MGAS10270</strain>
    </source>
</reference>
<proteinExistence type="inferred from homology"/>
<accession>Q1JIX4</accession>